<feature type="chain" id="PRO_0000092039" description="Energy-coupling factor transporter ATP-binding protein EcfA1">
    <location>
        <begin position="1"/>
        <end position="279"/>
    </location>
</feature>
<feature type="domain" description="ABC transporter" evidence="1">
    <location>
        <begin position="8"/>
        <end position="240"/>
    </location>
</feature>
<feature type="binding site" evidence="1">
    <location>
        <begin position="41"/>
        <end position="48"/>
    </location>
    <ligand>
        <name>ATP</name>
        <dbReference type="ChEBI" id="CHEBI:30616"/>
    </ligand>
</feature>
<gene>
    <name evidence="1" type="primary">ecfA1</name>
    <name type="synonym">cbiO1</name>
    <name type="ordered locus">MYCGA5790</name>
    <name type="ORF">MGA_0354</name>
</gene>
<protein>
    <recommendedName>
        <fullName evidence="1">Energy-coupling factor transporter ATP-binding protein EcfA1</fullName>
        <shortName evidence="1">ECF transporter A component EcfA1</shortName>
        <ecNumber evidence="1">7.-.-.-</ecNumber>
    </recommendedName>
</protein>
<evidence type="ECO:0000255" key="1">
    <source>
        <dbReference type="HAMAP-Rule" id="MF_01710"/>
    </source>
</evidence>
<reference key="1">
    <citation type="journal article" date="2003" name="Microbiology">
        <title>The complete genome sequence of the avian pathogen Mycoplasma gallisepticum strain R(low).</title>
        <authorList>
            <person name="Papazisi L."/>
            <person name="Gorton T.S."/>
            <person name="Kutish G."/>
            <person name="Markham P.F."/>
            <person name="Browning G.F."/>
            <person name="Nguyen D.K."/>
            <person name="Swartzell S."/>
            <person name="Madan A."/>
            <person name="Mahairas G."/>
            <person name="Geary S.J."/>
        </authorList>
    </citation>
    <scope>NUCLEOTIDE SEQUENCE [LARGE SCALE GENOMIC DNA]</scope>
    <source>
        <strain>R(low / passage 15 / clone 2)</strain>
    </source>
</reference>
<comment type="function">
    <text evidence="1">ATP-binding (A) component of a common energy-coupling factor (ECF) ABC-transporter complex. Unlike classic ABC transporters this ECF transporter provides the energy necessary to transport a number of different substrates.</text>
</comment>
<comment type="subunit">
    <text evidence="1">Forms a stable energy-coupling factor (ECF) transporter complex composed of 2 membrane-embedded substrate-binding proteins (S component), 2 ATP-binding proteins (A component) and 2 transmembrane proteins (T component).</text>
</comment>
<comment type="subcellular location">
    <subcellularLocation>
        <location evidence="1">Cell membrane</location>
        <topology evidence="1">Peripheral membrane protein</topology>
    </subcellularLocation>
</comment>
<comment type="similarity">
    <text evidence="1">Belongs to the ABC transporter superfamily. Energy-coupling factor EcfA family.</text>
</comment>
<dbReference type="EC" id="7.-.-.-" evidence="1"/>
<dbReference type="EMBL" id="AE015450">
    <property type="protein sequence ID" value="AAP56929.1"/>
    <property type="molecule type" value="Genomic_DNA"/>
</dbReference>
<dbReference type="RefSeq" id="WP_011113836.1">
    <property type="nucleotide sequence ID" value="NC_004829.2"/>
</dbReference>
<dbReference type="SMR" id="Q7NAQ6"/>
<dbReference type="KEGG" id="mga:MGA_0354"/>
<dbReference type="HOGENOM" id="CLU_000604_1_22_14"/>
<dbReference type="OrthoDB" id="9784332at2"/>
<dbReference type="Proteomes" id="UP000001418">
    <property type="component" value="Chromosome"/>
</dbReference>
<dbReference type="GO" id="GO:0043190">
    <property type="term" value="C:ATP-binding cassette (ABC) transporter complex"/>
    <property type="evidence" value="ECO:0007669"/>
    <property type="project" value="TreeGrafter"/>
</dbReference>
<dbReference type="GO" id="GO:0005524">
    <property type="term" value="F:ATP binding"/>
    <property type="evidence" value="ECO:0007669"/>
    <property type="project" value="UniProtKB-KW"/>
</dbReference>
<dbReference type="GO" id="GO:0016887">
    <property type="term" value="F:ATP hydrolysis activity"/>
    <property type="evidence" value="ECO:0007669"/>
    <property type="project" value="InterPro"/>
</dbReference>
<dbReference type="GO" id="GO:0042626">
    <property type="term" value="F:ATPase-coupled transmembrane transporter activity"/>
    <property type="evidence" value="ECO:0007669"/>
    <property type="project" value="TreeGrafter"/>
</dbReference>
<dbReference type="CDD" id="cd03225">
    <property type="entry name" value="ABC_cobalt_CbiO_domain1"/>
    <property type="match status" value="1"/>
</dbReference>
<dbReference type="FunFam" id="3.40.50.300:FF:000224">
    <property type="entry name" value="Energy-coupling factor transporter ATP-binding protein EcfA"/>
    <property type="match status" value="1"/>
</dbReference>
<dbReference type="Gene3D" id="3.40.50.300">
    <property type="entry name" value="P-loop containing nucleotide triphosphate hydrolases"/>
    <property type="match status" value="1"/>
</dbReference>
<dbReference type="InterPro" id="IPR003593">
    <property type="entry name" value="AAA+_ATPase"/>
</dbReference>
<dbReference type="InterPro" id="IPR003439">
    <property type="entry name" value="ABC_transporter-like_ATP-bd"/>
</dbReference>
<dbReference type="InterPro" id="IPR017871">
    <property type="entry name" value="ABC_transporter-like_CS"/>
</dbReference>
<dbReference type="InterPro" id="IPR015856">
    <property type="entry name" value="ABC_transpr_CbiO/EcfA_su"/>
</dbReference>
<dbReference type="InterPro" id="IPR050095">
    <property type="entry name" value="ECF_ABC_transporter_ATP-bd"/>
</dbReference>
<dbReference type="InterPro" id="IPR030947">
    <property type="entry name" value="EcfA_1"/>
</dbReference>
<dbReference type="InterPro" id="IPR027417">
    <property type="entry name" value="P-loop_NTPase"/>
</dbReference>
<dbReference type="NCBIfam" id="TIGR04520">
    <property type="entry name" value="ECF_ATPase_1"/>
    <property type="match status" value="1"/>
</dbReference>
<dbReference type="NCBIfam" id="NF010167">
    <property type="entry name" value="PRK13648.1"/>
    <property type="match status" value="1"/>
</dbReference>
<dbReference type="PANTHER" id="PTHR43553:SF24">
    <property type="entry name" value="ENERGY-COUPLING FACTOR TRANSPORTER ATP-BINDING PROTEIN ECFA1"/>
    <property type="match status" value="1"/>
</dbReference>
<dbReference type="PANTHER" id="PTHR43553">
    <property type="entry name" value="HEAVY METAL TRANSPORTER"/>
    <property type="match status" value="1"/>
</dbReference>
<dbReference type="Pfam" id="PF00005">
    <property type="entry name" value="ABC_tran"/>
    <property type="match status" value="1"/>
</dbReference>
<dbReference type="SMART" id="SM00382">
    <property type="entry name" value="AAA"/>
    <property type="match status" value="1"/>
</dbReference>
<dbReference type="SUPFAM" id="SSF52540">
    <property type="entry name" value="P-loop containing nucleoside triphosphate hydrolases"/>
    <property type="match status" value="1"/>
</dbReference>
<dbReference type="PROSITE" id="PS00211">
    <property type="entry name" value="ABC_TRANSPORTER_1"/>
    <property type="match status" value="1"/>
</dbReference>
<dbReference type="PROSITE" id="PS50893">
    <property type="entry name" value="ABC_TRANSPORTER_2"/>
    <property type="match status" value="1"/>
</dbReference>
<dbReference type="PROSITE" id="PS51246">
    <property type="entry name" value="CBIO"/>
    <property type="match status" value="1"/>
</dbReference>
<accession>Q7NAQ6</accession>
<name>ECFA1_MYCGA</name>
<keyword id="KW-0067">ATP-binding</keyword>
<keyword id="KW-1003">Cell membrane</keyword>
<keyword id="KW-0472">Membrane</keyword>
<keyword id="KW-0547">Nucleotide-binding</keyword>
<keyword id="KW-1185">Reference proteome</keyword>
<keyword id="KW-1278">Translocase</keyword>
<keyword id="KW-0813">Transport</keyword>
<sequence length="279" mass="31633">MDNKNSVIKFENVSFSYNSKKQVLKNVSYEIYEKEYVCIVGHNGSGKSTMSKLLTGILKPLAGTIYLFGYAISRDNIKFLRDNVGIIFQNPDNQFIGITAEDDIAFGLENRKIPRGEIKRIIDSVADKVGIKDILKFEPHKLSGGQKQRVAIASVLAINPSIILFDESTSMLDPKGKKDIKSFMLQLRNQGKTVISITHDMEEVVNCDRVLVMDHGNLIKQGRPDEIFKDKQFLRDINLDVPFSLDLAMQLNELDEKINSTLRYNELIDNICSRVDQKD</sequence>
<organism>
    <name type="scientific">Mycoplasmoides gallisepticum (strain R(low / passage 15 / clone 2))</name>
    <name type="common">Mycoplasma gallisepticum</name>
    <dbReference type="NCBI Taxonomy" id="710127"/>
    <lineage>
        <taxon>Bacteria</taxon>
        <taxon>Bacillati</taxon>
        <taxon>Mycoplasmatota</taxon>
        <taxon>Mycoplasmoidales</taxon>
        <taxon>Mycoplasmoidaceae</taxon>
        <taxon>Mycoplasmoides</taxon>
    </lineage>
</organism>
<proteinExistence type="inferred from homology"/>